<name>DAPA_LACP3</name>
<protein>
    <recommendedName>
        <fullName evidence="1">4-hydroxy-tetrahydrodipicolinate synthase</fullName>
        <shortName evidence="1">HTPA synthase</shortName>
        <ecNumber evidence="1">4.3.3.7</ecNumber>
    </recommendedName>
</protein>
<reference key="1">
    <citation type="journal article" date="2006" name="Proc. Natl. Acad. Sci. U.S.A.">
        <title>Comparative genomics of the lactic acid bacteria.</title>
        <authorList>
            <person name="Makarova K.S."/>
            <person name="Slesarev A."/>
            <person name="Wolf Y.I."/>
            <person name="Sorokin A."/>
            <person name="Mirkin B."/>
            <person name="Koonin E.V."/>
            <person name="Pavlov A."/>
            <person name="Pavlova N."/>
            <person name="Karamychev V."/>
            <person name="Polouchine N."/>
            <person name="Shakhova V."/>
            <person name="Grigoriev I."/>
            <person name="Lou Y."/>
            <person name="Rohksar D."/>
            <person name="Lucas S."/>
            <person name="Huang K."/>
            <person name="Goodstein D.M."/>
            <person name="Hawkins T."/>
            <person name="Plengvidhya V."/>
            <person name="Welker D."/>
            <person name="Hughes J."/>
            <person name="Goh Y."/>
            <person name="Benson A."/>
            <person name="Baldwin K."/>
            <person name="Lee J.-H."/>
            <person name="Diaz-Muniz I."/>
            <person name="Dosti B."/>
            <person name="Smeianov V."/>
            <person name="Wechter W."/>
            <person name="Barabote R."/>
            <person name="Lorca G."/>
            <person name="Altermann E."/>
            <person name="Barrangou R."/>
            <person name="Ganesan B."/>
            <person name="Xie Y."/>
            <person name="Rawsthorne H."/>
            <person name="Tamir D."/>
            <person name="Parker C."/>
            <person name="Breidt F."/>
            <person name="Broadbent J.R."/>
            <person name="Hutkins R."/>
            <person name="O'Sullivan D."/>
            <person name="Steele J."/>
            <person name="Unlu G."/>
            <person name="Saier M.H. Jr."/>
            <person name="Klaenhammer T."/>
            <person name="Richardson P."/>
            <person name="Kozyavkin S."/>
            <person name="Weimer B.C."/>
            <person name="Mills D.A."/>
        </authorList>
    </citation>
    <scope>NUCLEOTIDE SEQUENCE [LARGE SCALE GENOMIC DNA]</scope>
    <source>
        <strain>ATCC 334 / BCRC 17002 / CCUG 31169 / CIP 107868 / KCTC 3260 / NRRL B-441</strain>
    </source>
</reference>
<feature type="chain" id="PRO_0000340961" description="4-hydroxy-tetrahydrodipicolinate synthase">
    <location>
        <begin position="1"/>
        <end position="301"/>
    </location>
</feature>
<feature type="active site" description="Proton donor/acceptor" evidence="1">
    <location>
        <position position="135"/>
    </location>
</feature>
<feature type="active site" description="Schiff-base intermediate with substrate" evidence="1">
    <location>
        <position position="163"/>
    </location>
</feature>
<feature type="binding site" evidence="1">
    <location>
        <position position="46"/>
    </location>
    <ligand>
        <name>pyruvate</name>
        <dbReference type="ChEBI" id="CHEBI:15361"/>
    </ligand>
</feature>
<feature type="binding site" evidence="1">
    <location>
        <position position="205"/>
    </location>
    <ligand>
        <name>pyruvate</name>
        <dbReference type="ChEBI" id="CHEBI:15361"/>
    </ligand>
</feature>
<feature type="site" description="Part of a proton relay during catalysis" evidence="1">
    <location>
        <position position="45"/>
    </location>
</feature>
<feature type="site" description="Part of a proton relay during catalysis" evidence="1">
    <location>
        <position position="109"/>
    </location>
</feature>
<accession>Q03CW3</accession>
<sequence length="301" mass="31991">MQKAELITAIVTPFNDRDEIDYGVMQRLVDHLIAEGTDGFVVGATTGEGPTLSHPEKITLYTRFADMVHGRALVIANSGSNNTKETAAFTHEVGGIAGIDATLVVVPYYNKPDQNGMIAHYTAVAAAAQKPIVIYNIPGRTGVDMLPATVATLAQNPMIQGIKQCGSLPALSDIIDRTKHDAFNVWTGEDAQALNIKTLGGMGVISVAAHLYAHSIREMYAALDRGDITTVAALQRQLLPKMAALFHFPSPAPTKAALNALGFQVGSPRLPLLPLNASQQQELAHLLGVPELSAIEAEVLA</sequence>
<proteinExistence type="inferred from homology"/>
<evidence type="ECO:0000255" key="1">
    <source>
        <dbReference type="HAMAP-Rule" id="MF_00418"/>
    </source>
</evidence>
<evidence type="ECO:0000305" key="2"/>
<keyword id="KW-0028">Amino-acid biosynthesis</keyword>
<keyword id="KW-0963">Cytoplasm</keyword>
<keyword id="KW-0220">Diaminopimelate biosynthesis</keyword>
<keyword id="KW-0456">Lyase</keyword>
<keyword id="KW-0457">Lysine biosynthesis</keyword>
<keyword id="KW-1185">Reference proteome</keyword>
<keyword id="KW-0704">Schiff base</keyword>
<gene>
    <name evidence="1" type="primary">dapA</name>
    <name type="ordered locus">LSEI_0095</name>
</gene>
<comment type="function">
    <text evidence="1">Catalyzes the condensation of (S)-aspartate-beta-semialdehyde [(S)-ASA] and pyruvate to 4-hydroxy-tetrahydrodipicolinate (HTPA).</text>
</comment>
<comment type="catalytic activity">
    <reaction evidence="1">
        <text>L-aspartate 4-semialdehyde + pyruvate = (2S,4S)-4-hydroxy-2,3,4,5-tetrahydrodipicolinate + H2O + H(+)</text>
        <dbReference type="Rhea" id="RHEA:34171"/>
        <dbReference type="ChEBI" id="CHEBI:15361"/>
        <dbReference type="ChEBI" id="CHEBI:15377"/>
        <dbReference type="ChEBI" id="CHEBI:15378"/>
        <dbReference type="ChEBI" id="CHEBI:67139"/>
        <dbReference type="ChEBI" id="CHEBI:537519"/>
        <dbReference type="EC" id="4.3.3.7"/>
    </reaction>
</comment>
<comment type="pathway">
    <text evidence="1">Amino-acid biosynthesis; L-lysine biosynthesis via DAP pathway; (S)-tetrahydrodipicolinate from L-aspartate: step 3/4.</text>
</comment>
<comment type="subunit">
    <text evidence="1">Homotetramer; dimer of dimers.</text>
</comment>
<comment type="subcellular location">
    <subcellularLocation>
        <location evidence="1">Cytoplasm</location>
    </subcellularLocation>
</comment>
<comment type="similarity">
    <text evidence="1">Belongs to the DapA family.</text>
</comment>
<comment type="caution">
    <text evidence="2">Was originally thought to be a dihydrodipicolinate synthase (DHDPS), catalyzing the condensation of (S)-aspartate-beta-semialdehyde [(S)-ASA] and pyruvate to dihydrodipicolinate (DHDP). However, it was shown in E.coli that the product of the enzymatic reaction is not dihydrodipicolinate but in fact (4S)-4-hydroxy-2,3,4,5-tetrahydro-(2S)-dipicolinic acid (HTPA), and that the consecutive dehydration reaction leading to DHDP is not spontaneous but catalyzed by DapB.</text>
</comment>
<organism>
    <name type="scientific">Lacticaseibacillus paracasei (strain ATCC 334 / BCRC 17002 / CCUG 31169 / CIP 107868 / KCTC 3260 / NRRL B-441)</name>
    <name type="common">Lactobacillus paracasei</name>
    <dbReference type="NCBI Taxonomy" id="321967"/>
    <lineage>
        <taxon>Bacteria</taxon>
        <taxon>Bacillati</taxon>
        <taxon>Bacillota</taxon>
        <taxon>Bacilli</taxon>
        <taxon>Lactobacillales</taxon>
        <taxon>Lactobacillaceae</taxon>
        <taxon>Lacticaseibacillus</taxon>
    </lineage>
</organism>
<dbReference type="EC" id="4.3.3.7" evidence="1"/>
<dbReference type="EMBL" id="CP000423">
    <property type="protein sequence ID" value="ABJ68959.1"/>
    <property type="molecule type" value="Genomic_DNA"/>
</dbReference>
<dbReference type="RefSeq" id="WP_003572968.1">
    <property type="nucleotide sequence ID" value="NC_008526.1"/>
</dbReference>
<dbReference type="RefSeq" id="YP_805401.1">
    <property type="nucleotide sequence ID" value="NC_008526.1"/>
</dbReference>
<dbReference type="SMR" id="Q03CW3"/>
<dbReference type="STRING" id="321967.LSEI_0095"/>
<dbReference type="PaxDb" id="321967-LSEI_0095"/>
<dbReference type="KEGG" id="lca:LSEI_0095"/>
<dbReference type="PATRIC" id="fig|321967.11.peg.117"/>
<dbReference type="HOGENOM" id="CLU_049343_7_1_9"/>
<dbReference type="UniPathway" id="UPA00034">
    <property type="reaction ID" value="UER00017"/>
</dbReference>
<dbReference type="Proteomes" id="UP000001651">
    <property type="component" value="Chromosome"/>
</dbReference>
<dbReference type="GO" id="GO:0005829">
    <property type="term" value="C:cytosol"/>
    <property type="evidence" value="ECO:0007669"/>
    <property type="project" value="TreeGrafter"/>
</dbReference>
<dbReference type="GO" id="GO:0008840">
    <property type="term" value="F:4-hydroxy-tetrahydrodipicolinate synthase activity"/>
    <property type="evidence" value="ECO:0007669"/>
    <property type="project" value="UniProtKB-UniRule"/>
</dbReference>
<dbReference type="GO" id="GO:0019877">
    <property type="term" value="P:diaminopimelate biosynthetic process"/>
    <property type="evidence" value="ECO:0007669"/>
    <property type="project" value="UniProtKB-UniRule"/>
</dbReference>
<dbReference type="GO" id="GO:0009089">
    <property type="term" value="P:lysine biosynthetic process via diaminopimelate"/>
    <property type="evidence" value="ECO:0007669"/>
    <property type="project" value="UniProtKB-UniRule"/>
</dbReference>
<dbReference type="CDD" id="cd00950">
    <property type="entry name" value="DHDPS"/>
    <property type="match status" value="1"/>
</dbReference>
<dbReference type="Gene3D" id="3.20.20.70">
    <property type="entry name" value="Aldolase class I"/>
    <property type="match status" value="1"/>
</dbReference>
<dbReference type="HAMAP" id="MF_00418">
    <property type="entry name" value="DapA"/>
    <property type="match status" value="1"/>
</dbReference>
<dbReference type="InterPro" id="IPR013785">
    <property type="entry name" value="Aldolase_TIM"/>
</dbReference>
<dbReference type="InterPro" id="IPR005263">
    <property type="entry name" value="DapA"/>
</dbReference>
<dbReference type="InterPro" id="IPR002220">
    <property type="entry name" value="DapA-like"/>
</dbReference>
<dbReference type="InterPro" id="IPR020625">
    <property type="entry name" value="Schiff_base-form_aldolases_AS"/>
</dbReference>
<dbReference type="NCBIfam" id="TIGR00674">
    <property type="entry name" value="dapA"/>
    <property type="match status" value="1"/>
</dbReference>
<dbReference type="PANTHER" id="PTHR12128:SF66">
    <property type="entry name" value="4-HYDROXY-2-OXOGLUTARATE ALDOLASE, MITOCHONDRIAL"/>
    <property type="match status" value="1"/>
</dbReference>
<dbReference type="PANTHER" id="PTHR12128">
    <property type="entry name" value="DIHYDRODIPICOLINATE SYNTHASE"/>
    <property type="match status" value="1"/>
</dbReference>
<dbReference type="Pfam" id="PF00701">
    <property type="entry name" value="DHDPS"/>
    <property type="match status" value="1"/>
</dbReference>
<dbReference type="PIRSF" id="PIRSF001365">
    <property type="entry name" value="DHDPS"/>
    <property type="match status" value="1"/>
</dbReference>
<dbReference type="PRINTS" id="PR00146">
    <property type="entry name" value="DHPICSNTHASE"/>
</dbReference>
<dbReference type="SMART" id="SM01130">
    <property type="entry name" value="DHDPS"/>
    <property type="match status" value="1"/>
</dbReference>
<dbReference type="SUPFAM" id="SSF51569">
    <property type="entry name" value="Aldolase"/>
    <property type="match status" value="1"/>
</dbReference>
<dbReference type="PROSITE" id="PS00666">
    <property type="entry name" value="DHDPS_2"/>
    <property type="match status" value="1"/>
</dbReference>